<dbReference type="EMBL" id="AF017750">
    <property type="protein sequence ID" value="AAC46218.1"/>
    <property type="molecule type" value="Genomic_DNA"/>
</dbReference>
<dbReference type="EMBL" id="AE017143">
    <property type="protein sequence ID" value="AAP95299.1"/>
    <property type="molecule type" value="Genomic_DNA"/>
</dbReference>
<dbReference type="RefSeq" id="WP_010944352.1">
    <property type="nucleotide sequence ID" value="NC_002940.2"/>
</dbReference>
<dbReference type="SMR" id="O30825"/>
<dbReference type="STRING" id="233412.HD_0322"/>
<dbReference type="KEGG" id="hdu:HD_0322"/>
<dbReference type="eggNOG" id="COG0251">
    <property type="taxonomic scope" value="Bacteria"/>
</dbReference>
<dbReference type="HOGENOM" id="CLU_100715_6_1_6"/>
<dbReference type="OrthoDB" id="6899345at2"/>
<dbReference type="Proteomes" id="UP000001022">
    <property type="component" value="Chromosome"/>
</dbReference>
<dbReference type="CDD" id="cd06150">
    <property type="entry name" value="YjgF_YER057c_UK114_like_2"/>
    <property type="match status" value="1"/>
</dbReference>
<dbReference type="Gene3D" id="3.30.1330.40">
    <property type="entry name" value="RutC-like"/>
    <property type="match status" value="1"/>
</dbReference>
<dbReference type="InterPro" id="IPR019897">
    <property type="entry name" value="RidA_CS"/>
</dbReference>
<dbReference type="InterPro" id="IPR035959">
    <property type="entry name" value="RutC-like_sf"/>
</dbReference>
<dbReference type="InterPro" id="IPR006175">
    <property type="entry name" value="YjgF/YER057c/UK114"/>
</dbReference>
<dbReference type="InterPro" id="IPR035709">
    <property type="entry name" value="YoaB-like"/>
</dbReference>
<dbReference type="PANTHER" id="PTHR47328">
    <property type="match status" value="1"/>
</dbReference>
<dbReference type="PANTHER" id="PTHR47328:SF1">
    <property type="entry name" value="RUTC FAMILY PROTEIN YOAB"/>
    <property type="match status" value="1"/>
</dbReference>
<dbReference type="Pfam" id="PF01042">
    <property type="entry name" value="Ribonuc_L-PSP"/>
    <property type="match status" value="1"/>
</dbReference>
<dbReference type="SUPFAM" id="SSF55298">
    <property type="entry name" value="YjgF-like"/>
    <property type="match status" value="1"/>
</dbReference>
<dbReference type="PROSITE" id="PS01094">
    <property type="entry name" value="UPF0076"/>
    <property type="match status" value="1"/>
</dbReference>
<feature type="chain" id="PRO_0000170334" description="RutC family protein HD_0322">
    <location>
        <begin position="1"/>
        <end position="117"/>
    </location>
</feature>
<organism>
    <name type="scientific">Haemophilus ducreyi (strain 35000HP / ATCC 700724)</name>
    <dbReference type="NCBI Taxonomy" id="233412"/>
    <lineage>
        <taxon>Bacteria</taxon>
        <taxon>Pseudomonadati</taxon>
        <taxon>Pseudomonadota</taxon>
        <taxon>Gammaproteobacteria</taxon>
        <taxon>Pasteurellales</taxon>
        <taxon>Pasteurellaceae</taxon>
        <taxon>Haemophilus</taxon>
    </lineage>
</organism>
<name>Y322_HAEDU</name>
<protein>
    <recommendedName>
        <fullName>RutC family protein HD_0322</fullName>
    </recommendedName>
</protein>
<accession>O30825</accession>
<comment type="similarity">
    <text evidence="1">Belongs to the RutC family.</text>
</comment>
<evidence type="ECO:0000305" key="1"/>
<keyword id="KW-1185">Reference proteome</keyword>
<proteinExistence type="inferred from homology"/>
<reference key="1">
    <citation type="submission" date="1997-08" db="EMBL/GenBank/DDBJ databases">
        <authorList>
            <person name="San Mateo L.R."/>
            <person name="Toffer K.L."/>
            <person name="Kawula T.H."/>
        </authorList>
    </citation>
    <scope>NUCLEOTIDE SEQUENCE [GENOMIC DNA]</scope>
    <source>
        <strain>35000HP / ATCC 700724</strain>
    </source>
</reference>
<reference key="2">
    <citation type="submission" date="2003-06" db="EMBL/GenBank/DDBJ databases">
        <title>The complete genome sequence of Haemophilus ducreyi.</title>
        <authorList>
            <person name="Munson R.S. Jr."/>
            <person name="Ray W.C."/>
            <person name="Mahairas G."/>
            <person name="Sabo P."/>
            <person name="Mungur R."/>
            <person name="Johnson L."/>
            <person name="Nguyen D."/>
            <person name="Wang J."/>
            <person name="Forst C."/>
            <person name="Hood L."/>
        </authorList>
    </citation>
    <scope>NUCLEOTIDE SEQUENCE [LARGE SCALE GENOMIC DNA]</scope>
    <source>
        <strain>35000HP / ATCC 700724</strain>
    </source>
</reference>
<gene>
    <name type="ordered locus">HD_0322</name>
</gene>
<sequence length="117" mass="13252">MITRIDVTNRFSEVAIYNGIAYFAGQVPTDESKDAYQQTQQVLSEIDKYLAKSNTDKSRILMATVYLANMADYTEMNRAWDEWVAPNNAPPRAAIEARLANPNWKVEIVITAAINHQ</sequence>